<comment type="function">
    <text evidence="1">Forms a chaperone-bound H2A.Z-H2B complex that acts as a source for SWR1 complex-dependent H2A to H2A.Z histone replacement in chromatin.</text>
</comment>
<comment type="subunit">
    <text evidence="1">Forms a heterotrimer with H2A.Z-H2B, stabilizing the association of the histone dimer. Also, with a lower affinity, forms a heterotrimer with H2A-H2B (By similarity).</text>
</comment>
<comment type="subcellular location">
    <subcellularLocation>
        <location evidence="1">Nucleus</location>
    </subcellularLocation>
</comment>
<comment type="similarity">
    <text evidence="3">Belongs to the CHZ1 family.</text>
</comment>
<keyword id="KW-0143">Chaperone</keyword>
<keyword id="KW-0539">Nucleus</keyword>
<keyword id="KW-1185">Reference proteome</keyword>
<dbReference type="EMBL" id="DS027688">
    <property type="protein sequence ID" value="EAW23031.1"/>
    <property type="molecule type" value="Genomic_DNA"/>
</dbReference>
<dbReference type="RefSeq" id="XP_001264928.1">
    <property type="nucleotide sequence ID" value="XM_001264927.1"/>
</dbReference>
<dbReference type="STRING" id="331117.A1D3N8"/>
<dbReference type="EnsemblFungi" id="EAW23031">
    <property type="protein sequence ID" value="EAW23031"/>
    <property type="gene ID" value="NFIA_017320"/>
</dbReference>
<dbReference type="GeneID" id="4591338"/>
<dbReference type="KEGG" id="nfi:NFIA_017320"/>
<dbReference type="VEuPathDB" id="FungiDB:NFIA_017320"/>
<dbReference type="eggNOG" id="ENOG502SCUM">
    <property type="taxonomic scope" value="Eukaryota"/>
</dbReference>
<dbReference type="HOGENOM" id="CLU_130004_1_1_1"/>
<dbReference type="OMA" id="MEGVQDP"/>
<dbReference type="OrthoDB" id="4174291at2759"/>
<dbReference type="Proteomes" id="UP000006702">
    <property type="component" value="Unassembled WGS sequence"/>
</dbReference>
<dbReference type="GO" id="GO:0005634">
    <property type="term" value="C:nucleus"/>
    <property type="evidence" value="ECO:0007669"/>
    <property type="project" value="UniProtKB-SubCell"/>
</dbReference>
<dbReference type="InterPro" id="IPR019098">
    <property type="entry name" value="Histone_chaperone_domain_CHZ"/>
</dbReference>
<dbReference type="Pfam" id="PF09649">
    <property type="entry name" value="CHZ"/>
    <property type="match status" value="1"/>
</dbReference>
<dbReference type="SMART" id="SM01082">
    <property type="entry name" value="CHZ"/>
    <property type="match status" value="1"/>
</dbReference>
<proteinExistence type="inferred from homology"/>
<reference key="1">
    <citation type="journal article" date="2008" name="PLoS Genet.">
        <title>Genomic islands in the pathogenic filamentous fungus Aspergillus fumigatus.</title>
        <authorList>
            <person name="Fedorova N.D."/>
            <person name="Khaldi N."/>
            <person name="Joardar V.S."/>
            <person name="Maiti R."/>
            <person name="Amedeo P."/>
            <person name="Anderson M.J."/>
            <person name="Crabtree J."/>
            <person name="Silva J.C."/>
            <person name="Badger J.H."/>
            <person name="Albarraq A."/>
            <person name="Angiuoli S."/>
            <person name="Bussey H."/>
            <person name="Bowyer P."/>
            <person name="Cotty P.J."/>
            <person name="Dyer P.S."/>
            <person name="Egan A."/>
            <person name="Galens K."/>
            <person name="Fraser-Liggett C.M."/>
            <person name="Haas B.J."/>
            <person name="Inman J.M."/>
            <person name="Kent R."/>
            <person name="Lemieux S."/>
            <person name="Malavazi I."/>
            <person name="Orvis J."/>
            <person name="Roemer T."/>
            <person name="Ronning C.M."/>
            <person name="Sundaram J.P."/>
            <person name="Sutton G."/>
            <person name="Turner G."/>
            <person name="Venter J.C."/>
            <person name="White O.R."/>
            <person name="Whitty B.R."/>
            <person name="Youngman P."/>
            <person name="Wolfe K.H."/>
            <person name="Goldman G.H."/>
            <person name="Wortman J.R."/>
            <person name="Jiang B."/>
            <person name="Denning D.W."/>
            <person name="Nierman W.C."/>
        </authorList>
    </citation>
    <scope>NUCLEOTIDE SEQUENCE [LARGE SCALE GENOMIC DNA]</scope>
    <source>
        <strain>ATCC 1020 / DSM 3700 / CBS 544.65 / FGSC A1164 / JCM 1740 / NRRL 181 / WB 181</strain>
    </source>
</reference>
<organism>
    <name type="scientific">Neosartorya fischeri (strain ATCC 1020 / DSM 3700 / CBS 544.65 / FGSC A1164 / JCM 1740 / NRRL 181 / WB 181)</name>
    <name type="common">Aspergillus fischerianus</name>
    <dbReference type="NCBI Taxonomy" id="331117"/>
    <lineage>
        <taxon>Eukaryota</taxon>
        <taxon>Fungi</taxon>
        <taxon>Dikarya</taxon>
        <taxon>Ascomycota</taxon>
        <taxon>Pezizomycotina</taxon>
        <taxon>Eurotiomycetes</taxon>
        <taxon>Eurotiomycetidae</taxon>
        <taxon>Eurotiales</taxon>
        <taxon>Aspergillaceae</taxon>
        <taxon>Aspergillus</taxon>
        <taxon>Aspergillus subgen. Fumigati</taxon>
    </lineage>
</organism>
<accession>A1D3N8</accession>
<evidence type="ECO:0000250" key="1"/>
<evidence type="ECO:0000256" key="2">
    <source>
        <dbReference type="SAM" id="MobiDB-lite"/>
    </source>
</evidence>
<evidence type="ECO:0000305" key="3"/>
<protein>
    <recommendedName>
        <fullName>Histone H2A.Z-specific chaperone chz1</fullName>
    </recommendedName>
</protein>
<sequence length="119" mass="13151">MGDNHQATLSNDPAANAPDAAAADKGKGKAADEPSLEMSMDEEEDSDESEAEEMVNDDDDDHDNLEPISEENIISGGRRTRGKTIDFQEAAEKLKAEDEMDDEDDDDEEFQPNDEDMRD</sequence>
<feature type="chain" id="PRO_0000330215" description="Histone H2A.Z-specific chaperone chz1">
    <location>
        <begin position="1"/>
        <end position="119"/>
    </location>
</feature>
<feature type="region of interest" description="Disordered" evidence="2">
    <location>
        <begin position="1"/>
        <end position="119"/>
    </location>
</feature>
<feature type="compositionally biased region" description="Polar residues" evidence="2">
    <location>
        <begin position="1"/>
        <end position="10"/>
    </location>
</feature>
<feature type="compositionally biased region" description="Low complexity" evidence="2">
    <location>
        <begin position="11"/>
        <end position="21"/>
    </location>
</feature>
<feature type="compositionally biased region" description="Basic and acidic residues" evidence="2">
    <location>
        <begin position="22"/>
        <end position="32"/>
    </location>
</feature>
<feature type="compositionally biased region" description="Acidic residues" evidence="2">
    <location>
        <begin position="39"/>
        <end position="63"/>
    </location>
</feature>
<feature type="compositionally biased region" description="Basic and acidic residues" evidence="2">
    <location>
        <begin position="83"/>
        <end position="97"/>
    </location>
</feature>
<feature type="compositionally biased region" description="Acidic residues" evidence="2">
    <location>
        <begin position="98"/>
        <end position="119"/>
    </location>
</feature>
<gene>
    <name type="primary">chz1</name>
    <name type="ORF">NFIA_017320</name>
</gene>
<name>CHZ1_NEOFI</name>